<gene>
    <name type="primary">STB5</name>
    <name type="ordered locus">YHR178W</name>
</gene>
<name>STB5_YEAST</name>
<sequence length="743" mass="83473">MDGPNFAHQGGRSQRTTELYSCARCRKLKKKCGKQIPTCANCDKNGAHCSYPGRAPRRTKKELADAMLRGEYVPVKRNKKVGKSPLSTKSMPNSSSPLSANGAITPGFSPYENDDAHKMKQLKPSDPINLVMGASPNSSEGVSSLISVLTSLNDNSNPSSHLSSNENSMIPSRSLPASVQQSSTTSSFGGYNTPSPLISSHVPANAQAVPLQNNNRNTSNGDNGSNVNHDNNNGSTNTPQLSLTPYANNSAPNGKFDSVPVDASSIEFETMSCCFKGGRTTSWVREDGSFKSIDRSLLDRFIAAYFKHNHRLFPMIDKIAFLNDAATITDFERLYDNKNYPDSFVFKVYMIMAIGCTTLQRAGMVSQDEECLSEHLAFLAMKKFRSVIILQDIETVRCLLLLGIYSFFEPKGSSSWTISGIIMRLTIGLGLNRELTAKKLKSMSALEAEARYRVFWSAYCFERLVCTSLGRISGIDDEDITVPLPRALYVDERDDLEMTKLMISLRKMGGRIYKQVHSVSAGRQKLTIEQKQEIISGLRKELDEIYSRESERRKLKKSQMDQVERENNSTTNVISFHSSEIWLAMRYSQLQILLYRPSALMPKPPIDSLSTLGEFCLQAWKHTYTLYKKRLLPLNWITLFRTLTICNTILYCLCQWSIDLIESKIEIQQCVEILRHFGERWIFAMRCADVFQNISNTILDISLSHGKVPNMDQLTRELFGASDSYQDILDENNVDVSWVDKLV</sequence>
<feature type="chain" id="PRO_0000114978" description="Protein STB5">
    <location>
        <begin position="1"/>
        <end position="743"/>
    </location>
</feature>
<feature type="DNA-binding region" description="Zn(2)-C6 fungal-type" evidence="1">
    <location>
        <begin position="22"/>
        <end position="49"/>
    </location>
</feature>
<feature type="region of interest" description="Disordered" evidence="2">
    <location>
        <begin position="81"/>
        <end position="100"/>
    </location>
</feature>
<feature type="region of interest" description="Disordered" evidence="2">
    <location>
        <begin position="155"/>
        <end position="249"/>
    </location>
</feature>
<feature type="compositionally biased region" description="Polar residues" evidence="2">
    <location>
        <begin position="85"/>
        <end position="99"/>
    </location>
</feature>
<feature type="compositionally biased region" description="Polar residues" evidence="2">
    <location>
        <begin position="155"/>
        <end position="198"/>
    </location>
</feature>
<feature type="compositionally biased region" description="Low complexity" evidence="2">
    <location>
        <begin position="213"/>
        <end position="238"/>
    </location>
</feature>
<feature type="compositionally biased region" description="Polar residues" evidence="2">
    <location>
        <begin position="239"/>
        <end position="249"/>
    </location>
</feature>
<reference key="1">
    <citation type="journal article" date="1994" name="Science">
        <title>Complete nucleotide sequence of Saccharomyces cerevisiae chromosome VIII.</title>
        <authorList>
            <person name="Johnston M."/>
            <person name="Andrews S."/>
            <person name="Brinkman R."/>
            <person name="Cooper J."/>
            <person name="Ding H."/>
            <person name="Dover J."/>
            <person name="Du Z."/>
            <person name="Favello A."/>
            <person name="Fulton L."/>
            <person name="Gattung S."/>
            <person name="Geisel C."/>
            <person name="Kirsten J."/>
            <person name="Kucaba T."/>
            <person name="Hillier L.W."/>
            <person name="Jier M."/>
            <person name="Johnston L."/>
            <person name="Langston Y."/>
            <person name="Latreille P."/>
            <person name="Louis E.J."/>
            <person name="Macri C."/>
            <person name="Mardis E."/>
            <person name="Menezes S."/>
            <person name="Mouser L."/>
            <person name="Nhan M."/>
            <person name="Rifkin L."/>
            <person name="Riles L."/>
            <person name="St Peter H."/>
            <person name="Trevaskis E."/>
            <person name="Vaughan K."/>
            <person name="Vignati D."/>
            <person name="Wilcox L."/>
            <person name="Wohldman P."/>
            <person name="Waterston R."/>
            <person name="Wilson R."/>
            <person name="Vaudin M."/>
        </authorList>
    </citation>
    <scope>NUCLEOTIDE SEQUENCE [LARGE SCALE GENOMIC DNA]</scope>
    <source>
        <strain>ATCC 204508 / S288c</strain>
    </source>
</reference>
<reference key="2">
    <citation type="journal article" date="2014" name="G3 (Bethesda)">
        <title>The reference genome sequence of Saccharomyces cerevisiae: Then and now.</title>
        <authorList>
            <person name="Engel S.R."/>
            <person name="Dietrich F.S."/>
            <person name="Fisk D.G."/>
            <person name="Binkley G."/>
            <person name="Balakrishnan R."/>
            <person name="Costanzo M.C."/>
            <person name="Dwight S.S."/>
            <person name="Hitz B.C."/>
            <person name="Karra K."/>
            <person name="Nash R.S."/>
            <person name="Weng S."/>
            <person name="Wong E.D."/>
            <person name="Lloyd P."/>
            <person name="Skrzypek M.S."/>
            <person name="Miyasato S.R."/>
            <person name="Simison M."/>
            <person name="Cherry J.M."/>
        </authorList>
    </citation>
    <scope>GENOME REANNOTATION</scope>
    <source>
        <strain>ATCC 204508 / S288c</strain>
    </source>
</reference>
<reference key="3">
    <citation type="journal article" date="1997" name="Mol. Gen. Genet.">
        <title>Identification of the Saccharomyces cerevisiae genes STB1-STB5 encoding Sin3p binding proteins.</title>
        <authorList>
            <person name="Kasten M.M."/>
            <person name="Stillman D.J."/>
        </authorList>
    </citation>
    <scope>NUCLEOTIDE SEQUENCE [GENOMIC DNA]</scope>
</reference>
<reference key="4">
    <citation type="journal article" date="2003" name="Nature">
        <title>Global analysis of protein expression in yeast.</title>
        <authorList>
            <person name="Ghaemmaghami S."/>
            <person name="Huh W.-K."/>
            <person name="Bower K."/>
            <person name="Howson R.W."/>
            <person name="Belle A."/>
            <person name="Dephoure N."/>
            <person name="O'Shea E.K."/>
            <person name="Weissman J.S."/>
        </authorList>
    </citation>
    <scope>LEVEL OF PROTEIN EXPRESSION [LARGE SCALE ANALYSIS]</scope>
</reference>
<reference key="5">
    <citation type="journal article" date="2008" name="Mol. Cell. Proteomics">
        <title>A multidimensional chromatography technology for in-depth phosphoproteome analysis.</title>
        <authorList>
            <person name="Albuquerque C.P."/>
            <person name="Smolka M.B."/>
            <person name="Payne S.H."/>
            <person name="Bafna V."/>
            <person name="Eng J."/>
            <person name="Zhou H."/>
        </authorList>
    </citation>
    <scope>IDENTIFICATION BY MASS SPECTROMETRY [LARGE SCALE ANALYSIS]</scope>
</reference>
<protein>
    <recommendedName>
        <fullName>Protein STB5</fullName>
    </recommendedName>
</protein>
<organism>
    <name type="scientific">Saccharomyces cerevisiae (strain ATCC 204508 / S288c)</name>
    <name type="common">Baker's yeast</name>
    <dbReference type="NCBI Taxonomy" id="559292"/>
    <lineage>
        <taxon>Eukaryota</taxon>
        <taxon>Fungi</taxon>
        <taxon>Dikarya</taxon>
        <taxon>Ascomycota</taxon>
        <taxon>Saccharomycotina</taxon>
        <taxon>Saccharomycetes</taxon>
        <taxon>Saccharomycetales</taxon>
        <taxon>Saccharomycetaceae</taxon>
        <taxon>Saccharomyces</taxon>
    </lineage>
</organism>
<evidence type="ECO:0000255" key="1">
    <source>
        <dbReference type="PROSITE-ProRule" id="PRU00227"/>
    </source>
</evidence>
<evidence type="ECO:0000256" key="2">
    <source>
        <dbReference type="SAM" id="MobiDB-lite"/>
    </source>
</evidence>
<evidence type="ECO:0000269" key="3">
    <source>
    </source>
</evidence>
<evidence type="ECO:0000305" key="4"/>
<comment type="function">
    <text>Binds to SIN3.</text>
</comment>
<comment type="subcellular location">
    <subcellularLocation>
        <location evidence="4">Nucleus</location>
    </subcellularLocation>
</comment>
<comment type="miscellaneous">
    <text evidence="3">Present with 279 molecules/cell in log phase SD medium.</text>
</comment>
<proteinExistence type="evidence at protein level"/>
<accession>P38699</accession>
<accession>D3DLC7</accession>
<keyword id="KW-0238">DNA-binding</keyword>
<keyword id="KW-0479">Metal-binding</keyword>
<keyword id="KW-0539">Nucleus</keyword>
<keyword id="KW-1185">Reference proteome</keyword>
<keyword id="KW-0804">Transcription</keyword>
<keyword id="KW-0805">Transcription regulation</keyword>
<keyword id="KW-0862">Zinc</keyword>
<dbReference type="EMBL" id="U00027">
    <property type="protein sequence ID" value="AAB68023.1"/>
    <property type="molecule type" value="Genomic_DNA"/>
</dbReference>
<dbReference type="EMBL" id="BK006934">
    <property type="protein sequence ID" value="DAA06871.1"/>
    <property type="molecule type" value="Genomic_DNA"/>
</dbReference>
<dbReference type="PIR" id="S48917">
    <property type="entry name" value="S48917"/>
</dbReference>
<dbReference type="RefSeq" id="NP_012048.3">
    <property type="nucleotide sequence ID" value="NM_001179309.3"/>
</dbReference>
<dbReference type="SMR" id="P38699"/>
<dbReference type="BioGRID" id="36611">
    <property type="interactions" value="683"/>
</dbReference>
<dbReference type="DIP" id="DIP-827N"/>
<dbReference type="FunCoup" id="P38699">
    <property type="interactions" value="1405"/>
</dbReference>
<dbReference type="IntAct" id="P38699">
    <property type="interactions" value="4"/>
</dbReference>
<dbReference type="MINT" id="P38699"/>
<dbReference type="STRING" id="4932.YHR178W"/>
<dbReference type="GlyGen" id="P38699">
    <property type="glycosylation" value="1 site"/>
</dbReference>
<dbReference type="iPTMnet" id="P38699"/>
<dbReference type="PaxDb" id="4932-YHR178W"/>
<dbReference type="PeptideAtlas" id="P38699"/>
<dbReference type="EnsemblFungi" id="YHR178W_mRNA">
    <property type="protein sequence ID" value="YHR178W"/>
    <property type="gene ID" value="YHR178W"/>
</dbReference>
<dbReference type="GeneID" id="856583"/>
<dbReference type="KEGG" id="sce:YHR178W"/>
<dbReference type="AGR" id="SGD:S000001221"/>
<dbReference type="SGD" id="S000001221">
    <property type="gene designation" value="STB5"/>
</dbReference>
<dbReference type="VEuPathDB" id="FungiDB:YHR178W"/>
<dbReference type="eggNOG" id="ENOG502QTEH">
    <property type="taxonomic scope" value="Eukaryota"/>
</dbReference>
<dbReference type="GeneTree" id="ENSGT00940000176581"/>
<dbReference type="HOGENOM" id="CLU_011881_0_0_1"/>
<dbReference type="InParanoid" id="P38699"/>
<dbReference type="OMA" id="QNLFMCG"/>
<dbReference type="OrthoDB" id="189997at2759"/>
<dbReference type="BioCyc" id="YEAST:G3O-31211-MONOMER"/>
<dbReference type="BioGRID-ORCS" id="856583">
    <property type="hits" value="8 hits in 13 CRISPR screens"/>
</dbReference>
<dbReference type="PRO" id="PR:P38699"/>
<dbReference type="Proteomes" id="UP000002311">
    <property type="component" value="Chromosome VIII"/>
</dbReference>
<dbReference type="RNAct" id="P38699">
    <property type="molecule type" value="protein"/>
</dbReference>
<dbReference type="GO" id="GO:0005634">
    <property type="term" value="C:nucleus"/>
    <property type="evidence" value="ECO:0000305"/>
    <property type="project" value="SGD"/>
</dbReference>
<dbReference type="GO" id="GO:0003700">
    <property type="term" value="F:DNA-binding transcription factor activity"/>
    <property type="evidence" value="ECO:0000314"/>
    <property type="project" value="SGD"/>
</dbReference>
<dbReference type="GO" id="GO:0000981">
    <property type="term" value="F:DNA-binding transcription factor activity, RNA polymerase II-specific"/>
    <property type="evidence" value="ECO:0000318"/>
    <property type="project" value="GO_Central"/>
</dbReference>
<dbReference type="GO" id="GO:0043565">
    <property type="term" value="F:sequence-specific DNA binding"/>
    <property type="evidence" value="ECO:0007005"/>
    <property type="project" value="SGD"/>
</dbReference>
<dbReference type="GO" id="GO:0008270">
    <property type="term" value="F:zinc ion binding"/>
    <property type="evidence" value="ECO:0007669"/>
    <property type="project" value="InterPro"/>
</dbReference>
<dbReference type="GO" id="GO:0034599">
    <property type="term" value="P:cellular response to oxidative stress"/>
    <property type="evidence" value="ECO:0000315"/>
    <property type="project" value="SGD"/>
</dbReference>
<dbReference type="GO" id="GO:0045944">
    <property type="term" value="P:positive regulation of transcription by RNA polymerase II"/>
    <property type="evidence" value="ECO:0000318"/>
    <property type="project" value="GO_Central"/>
</dbReference>
<dbReference type="GO" id="GO:0006357">
    <property type="term" value="P:regulation of transcription by RNA polymerase II"/>
    <property type="evidence" value="ECO:0000315"/>
    <property type="project" value="SGD"/>
</dbReference>
<dbReference type="GO" id="GO:0006368">
    <property type="term" value="P:transcription elongation by RNA polymerase II"/>
    <property type="evidence" value="ECO:0000314"/>
    <property type="project" value="SGD"/>
</dbReference>
<dbReference type="CDD" id="cd12148">
    <property type="entry name" value="fungal_TF_MHR"/>
    <property type="match status" value="1"/>
</dbReference>
<dbReference type="CDD" id="cd00067">
    <property type="entry name" value="GAL4"/>
    <property type="match status" value="1"/>
</dbReference>
<dbReference type="Gene3D" id="4.10.240.10">
    <property type="entry name" value="Zn(2)-C6 fungal-type DNA-binding domain"/>
    <property type="match status" value="1"/>
</dbReference>
<dbReference type="InterPro" id="IPR007219">
    <property type="entry name" value="Transcription_factor_dom_fun"/>
</dbReference>
<dbReference type="InterPro" id="IPR052202">
    <property type="entry name" value="Yeast_MetPath_Reg"/>
</dbReference>
<dbReference type="InterPro" id="IPR036864">
    <property type="entry name" value="Zn2-C6_fun-type_DNA-bd_sf"/>
</dbReference>
<dbReference type="InterPro" id="IPR001138">
    <property type="entry name" value="Zn2Cys6_DnaBD"/>
</dbReference>
<dbReference type="PANTHER" id="PTHR47782:SF7">
    <property type="entry name" value="PROTEIN STB5"/>
    <property type="match status" value="1"/>
</dbReference>
<dbReference type="PANTHER" id="PTHR47782">
    <property type="entry name" value="ZN(II)2CYS6 TRANSCRIPTION FACTOR (EUROFUNG)-RELATED"/>
    <property type="match status" value="1"/>
</dbReference>
<dbReference type="Pfam" id="PF04082">
    <property type="entry name" value="Fungal_trans"/>
    <property type="match status" value="1"/>
</dbReference>
<dbReference type="Pfam" id="PF00172">
    <property type="entry name" value="Zn_clus"/>
    <property type="match status" value="1"/>
</dbReference>
<dbReference type="SMART" id="SM00906">
    <property type="entry name" value="Fungal_trans"/>
    <property type="match status" value="1"/>
</dbReference>
<dbReference type="SMART" id="SM00066">
    <property type="entry name" value="GAL4"/>
    <property type="match status" value="1"/>
</dbReference>
<dbReference type="SUPFAM" id="SSF57701">
    <property type="entry name" value="Zn2/Cys6 DNA-binding domain"/>
    <property type="match status" value="1"/>
</dbReference>
<dbReference type="PROSITE" id="PS00463">
    <property type="entry name" value="ZN2_CY6_FUNGAL_1"/>
    <property type="match status" value="1"/>
</dbReference>
<dbReference type="PROSITE" id="PS50048">
    <property type="entry name" value="ZN2_CY6_FUNGAL_2"/>
    <property type="match status" value="1"/>
</dbReference>